<gene>
    <name evidence="9" type="primary">Ptx</name>
</gene>
<comment type="function">
    <text evidence="6">Involved in left-right asymmetry in the developing embryo.</text>
</comment>
<comment type="subcellular location">
    <subcellularLocation>
        <location evidence="3 4">Nucleus</location>
    </subcellularLocation>
</comment>
<comment type="developmental stage">
    <text evidence="6">Expression is first detected in the early mid-gastrulae at the dorsal margin of the blastospore and at the anterior region of the ectoderm until the late gastrula stage. It then becomes restricted to the left anterodorsal wall of the primitive gut and to the developing left somitocoelomic system in the early neurulae stage. Expression continues on the left side in the developing preoral pit, the duct of the club-shaped gland and mouth as well as in the mesoderm at the caudal end. No expression is seen in the gland body on the right side or around the gill pores. By the mid-neurulae stage expression is detected in some cells of the central nervous system (CNS), this continues along with posterior expression in to the early larval stage. Around the rim of the mouth, expression is detected in the endoderm and ectoderm at the 36 and 48 hour larval stages. Left-sided asymmetric expression continues into the 48 hour larval stage in the preoral pit, but becomes weak or disappears in other regions.</text>
</comment>
<comment type="similarity">
    <text evidence="2">Belongs to the paired homeobox family. Bicoid subfamily.</text>
</comment>
<reference evidence="8 9" key="1">
    <citation type="journal article" date="2000" name="Development">
        <title>Left-right asymmetric expression of BbPtx, a Ptx-related gene, in a lancelet species and the developmental left-sidedness in deuterostomes.</title>
        <authorList>
            <person name="Yasui K."/>
            <person name="Zhang S."/>
            <person name="Uemura M."/>
            <person name="Saiga H."/>
        </authorList>
    </citation>
    <scope>NUCLEOTIDE SEQUENCE [MRNA]</scope>
    <scope>FUNCTION</scope>
    <scope>DEVELOPMENTAL STAGE</scope>
</reference>
<sequence length="331" mass="35780">MDTLNDSLSLEQLVSVSPRRSQLTMAGIPPINNSGTSTGSALDSTAVSGAHTSLAGTDSSMDSTHGSGAATVSAGSPVGKDSGSGSTPSTDVTQDDDEMRKRRRQRRQRTHFTSQQLQELEASFARNRYPDMATREEIAAWTNLTEARVRVWFKNRRAKWRKRERNQLGEFKNGFGPHFNGLMQPFDDGLYSGYSPAYNNWAAKVPSPLTAKSFPWGLNSSGVPNVNPLSSQAMCFTPPTTIGTATTMVPSMNVGNGLNSLSSLQNPTVAPCPYASPGQPYAYREQCNSSIAALRLKAKQHSTSVASSFSYPSPVRQQTLSACQYAVDRPV</sequence>
<evidence type="ECO:0000250" key="1">
    <source>
        <dbReference type="UniProtKB" id="Q9W5Z2"/>
    </source>
</evidence>
<evidence type="ECO:0000255" key="2"/>
<evidence type="ECO:0000255" key="3">
    <source>
        <dbReference type="PROSITE-ProRule" id="PRU00108"/>
    </source>
</evidence>
<evidence type="ECO:0000255" key="4">
    <source>
        <dbReference type="PROSITE-ProRule" id="PRU00138"/>
    </source>
</evidence>
<evidence type="ECO:0000256" key="5">
    <source>
        <dbReference type="SAM" id="MobiDB-lite"/>
    </source>
</evidence>
<evidence type="ECO:0000269" key="6">
    <source>
    </source>
</evidence>
<evidence type="ECO:0000303" key="7">
    <source>
    </source>
</evidence>
<evidence type="ECO:0000305" key="8"/>
<evidence type="ECO:0000312" key="9">
    <source>
        <dbReference type="EMBL" id="AAF03901.1"/>
    </source>
</evidence>
<feature type="chain" id="PRO_0000396654" description="Pituitary homeobox x">
    <location>
        <begin position="1"/>
        <end position="331"/>
    </location>
</feature>
<feature type="DNA-binding region" description="Homeobox" evidence="3">
    <location>
        <begin position="105"/>
        <end position="164"/>
    </location>
</feature>
<feature type="region of interest" description="Disordered" evidence="5">
    <location>
        <begin position="25"/>
        <end position="44"/>
    </location>
</feature>
<feature type="region of interest" description="Disordered" evidence="5">
    <location>
        <begin position="53"/>
        <end position="116"/>
    </location>
</feature>
<feature type="short sequence motif" description="OAR" evidence="4">
    <location>
        <begin position="289"/>
        <end position="302"/>
    </location>
</feature>
<feature type="short sequence motif" description="Nuclear localization signal" evidence="1 2">
    <location>
        <begin position="295"/>
        <end position="299"/>
    </location>
</feature>
<feature type="compositionally biased region" description="Polar residues" evidence="5">
    <location>
        <begin position="31"/>
        <end position="44"/>
    </location>
</feature>
<feature type="compositionally biased region" description="Polar residues" evidence="5">
    <location>
        <begin position="53"/>
        <end position="66"/>
    </location>
</feature>
<feature type="compositionally biased region" description="Polar residues" evidence="5">
    <location>
        <begin position="83"/>
        <end position="92"/>
    </location>
</feature>
<feature type="compositionally biased region" description="Basic residues" evidence="5">
    <location>
        <begin position="101"/>
        <end position="110"/>
    </location>
</feature>
<dbReference type="EMBL" id="AF195616">
    <property type="protein sequence ID" value="AAF03901.1"/>
    <property type="molecule type" value="mRNA"/>
</dbReference>
<dbReference type="SMR" id="Q9U637"/>
<dbReference type="Proteomes" id="UP000515135">
    <property type="component" value="Unplaced"/>
</dbReference>
<dbReference type="GO" id="GO:0005634">
    <property type="term" value="C:nucleus"/>
    <property type="evidence" value="ECO:0007669"/>
    <property type="project" value="UniProtKB-SubCell"/>
</dbReference>
<dbReference type="GO" id="GO:0000981">
    <property type="term" value="F:DNA-binding transcription factor activity, RNA polymerase II-specific"/>
    <property type="evidence" value="ECO:0007669"/>
    <property type="project" value="InterPro"/>
</dbReference>
<dbReference type="GO" id="GO:0000978">
    <property type="term" value="F:RNA polymerase II cis-regulatory region sequence-specific DNA binding"/>
    <property type="evidence" value="ECO:0007669"/>
    <property type="project" value="TreeGrafter"/>
</dbReference>
<dbReference type="GO" id="GO:0009653">
    <property type="term" value="P:anatomical structure morphogenesis"/>
    <property type="evidence" value="ECO:0007669"/>
    <property type="project" value="TreeGrafter"/>
</dbReference>
<dbReference type="CDD" id="cd00086">
    <property type="entry name" value="homeodomain"/>
    <property type="match status" value="1"/>
</dbReference>
<dbReference type="FunFam" id="1.10.10.60:FF:000031">
    <property type="entry name" value="Homeobox protein"/>
    <property type="match status" value="1"/>
</dbReference>
<dbReference type="Gene3D" id="1.10.10.60">
    <property type="entry name" value="Homeodomain-like"/>
    <property type="match status" value="1"/>
</dbReference>
<dbReference type="InterPro" id="IPR001356">
    <property type="entry name" value="HD"/>
</dbReference>
<dbReference type="InterPro" id="IPR017970">
    <property type="entry name" value="Homeobox_CS"/>
</dbReference>
<dbReference type="InterPro" id="IPR016233">
    <property type="entry name" value="Homeobox_Pitx/unc30"/>
</dbReference>
<dbReference type="InterPro" id="IPR009057">
    <property type="entry name" value="Homeodomain-like_sf"/>
</dbReference>
<dbReference type="InterPro" id="IPR003654">
    <property type="entry name" value="OAR_dom"/>
</dbReference>
<dbReference type="PANTHER" id="PTHR45882">
    <property type="entry name" value="PITUITARY HOMEOBOX HOMOLOG PTX1"/>
    <property type="match status" value="1"/>
</dbReference>
<dbReference type="PANTHER" id="PTHR45882:SF3">
    <property type="entry name" value="PITUITARY HOMEOBOX HOMOLOG PTX1"/>
    <property type="match status" value="1"/>
</dbReference>
<dbReference type="Pfam" id="PF00046">
    <property type="entry name" value="Homeodomain"/>
    <property type="match status" value="1"/>
</dbReference>
<dbReference type="Pfam" id="PF03826">
    <property type="entry name" value="OAR"/>
    <property type="match status" value="1"/>
</dbReference>
<dbReference type="PIRSF" id="PIRSF000563">
    <property type="entry name" value="Homeobox_protein_Pitx/Unc30"/>
    <property type="match status" value="1"/>
</dbReference>
<dbReference type="SMART" id="SM00389">
    <property type="entry name" value="HOX"/>
    <property type="match status" value="1"/>
</dbReference>
<dbReference type="SUPFAM" id="SSF46689">
    <property type="entry name" value="Homeodomain-like"/>
    <property type="match status" value="1"/>
</dbReference>
<dbReference type="PROSITE" id="PS00027">
    <property type="entry name" value="HOMEOBOX_1"/>
    <property type="match status" value="1"/>
</dbReference>
<dbReference type="PROSITE" id="PS50071">
    <property type="entry name" value="HOMEOBOX_2"/>
    <property type="match status" value="1"/>
</dbReference>
<dbReference type="PROSITE" id="PS50803">
    <property type="entry name" value="OAR"/>
    <property type="match status" value="1"/>
</dbReference>
<keyword id="KW-0217">Developmental protein</keyword>
<keyword id="KW-0238">DNA-binding</keyword>
<keyword id="KW-0371">Homeobox</keyword>
<keyword id="KW-0539">Nucleus</keyword>
<keyword id="KW-1185">Reference proteome</keyword>
<accession>Q9U637</accession>
<protein>
    <recommendedName>
        <fullName evidence="1">Pituitary homeobox x</fullName>
    </recommendedName>
    <alternativeName>
        <fullName evidence="9">Bicoid type transcription factor Pitx</fullName>
        <shortName evidence="7">BbPtx</shortName>
    </alternativeName>
    <alternativeName>
        <fullName evidence="1">Homeobox protein Ptx</fullName>
    </alternativeName>
    <alternativeName>
        <fullName evidence="1">Paired-like homeodomain transcription factor x</fullName>
    </alternativeName>
</protein>
<name>PITX_BRABE</name>
<proteinExistence type="evidence at transcript level"/>
<organism>
    <name type="scientific">Branchiostoma belcheri</name>
    <name type="common">Amphioxus</name>
    <dbReference type="NCBI Taxonomy" id="7741"/>
    <lineage>
        <taxon>Eukaryota</taxon>
        <taxon>Metazoa</taxon>
        <taxon>Chordata</taxon>
        <taxon>Cephalochordata</taxon>
        <taxon>Leptocardii</taxon>
        <taxon>Amphioxiformes</taxon>
        <taxon>Branchiostomatidae</taxon>
        <taxon>Branchiostoma</taxon>
    </lineage>
</organism>